<protein>
    <recommendedName>
        <fullName evidence="1">ATP synthase subunit a</fullName>
    </recommendedName>
    <alternativeName>
        <fullName evidence="1">ATP synthase F0 sector subunit a</fullName>
    </alternativeName>
    <alternativeName>
        <fullName evidence="1">F-ATPase subunit 6</fullName>
    </alternativeName>
</protein>
<name>ATP6_RHOP5</name>
<dbReference type="EMBL" id="CP000463">
    <property type="protein sequence ID" value="ABJ08698.1"/>
    <property type="molecule type" value="Genomic_DNA"/>
</dbReference>
<dbReference type="SMR" id="Q07H86"/>
<dbReference type="STRING" id="316055.RPE_4779"/>
<dbReference type="KEGG" id="rpe:RPE_4779"/>
<dbReference type="eggNOG" id="COG0356">
    <property type="taxonomic scope" value="Bacteria"/>
</dbReference>
<dbReference type="HOGENOM" id="CLU_041018_0_2_5"/>
<dbReference type="OrthoDB" id="9809130at2"/>
<dbReference type="GO" id="GO:0005886">
    <property type="term" value="C:plasma membrane"/>
    <property type="evidence" value="ECO:0007669"/>
    <property type="project" value="UniProtKB-SubCell"/>
</dbReference>
<dbReference type="GO" id="GO:0045259">
    <property type="term" value="C:proton-transporting ATP synthase complex"/>
    <property type="evidence" value="ECO:0007669"/>
    <property type="project" value="UniProtKB-KW"/>
</dbReference>
<dbReference type="GO" id="GO:0046933">
    <property type="term" value="F:proton-transporting ATP synthase activity, rotational mechanism"/>
    <property type="evidence" value="ECO:0007669"/>
    <property type="project" value="UniProtKB-UniRule"/>
</dbReference>
<dbReference type="CDD" id="cd00310">
    <property type="entry name" value="ATP-synt_Fo_a_6"/>
    <property type="match status" value="1"/>
</dbReference>
<dbReference type="FunFam" id="1.20.120.220:FF:000003">
    <property type="entry name" value="ATP synthase subunit a"/>
    <property type="match status" value="1"/>
</dbReference>
<dbReference type="Gene3D" id="1.20.120.220">
    <property type="entry name" value="ATP synthase, F0 complex, subunit A"/>
    <property type="match status" value="1"/>
</dbReference>
<dbReference type="HAMAP" id="MF_01393">
    <property type="entry name" value="ATP_synth_a_bact"/>
    <property type="match status" value="1"/>
</dbReference>
<dbReference type="InterPro" id="IPR000568">
    <property type="entry name" value="ATP_synth_F0_asu"/>
</dbReference>
<dbReference type="InterPro" id="IPR023011">
    <property type="entry name" value="ATP_synth_F0_asu_AS"/>
</dbReference>
<dbReference type="InterPro" id="IPR045083">
    <property type="entry name" value="ATP_synth_F0_asu_bact/mt"/>
</dbReference>
<dbReference type="InterPro" id="IPR035908">
    <property type="entry name" value="F0_ATP_A_sf"/>
</dbReference>
<dbReference type="NCBIfam" id="TIGR01131">
    <property type="entry name" value="ATP_synt_6_or_A"/>
    <property type="match status" value="1"/>
</dbReference>
<dbReference type="NCBIfam" id="NF004482">
    <property type="entry name" value="PRK05815.2-4"/>
    <property type="match status" value="1"/>
</dbReference>
<dbReference type="PANTHER" id="PTHR11410">
    <property type="entry name" value="ATP SYNTHASE SUBUNIT A"/>
    <property type="match status" value="1"/>
</dbReference>
<dbReference type="PANTHER" id="PTHR11410:SF0">
    <property type="entry name" value="ATP SYNTHASE SUBUNIT A"/>
    <property type="match status" value="1"/>
</dbReference>
<dbReference type="Pfam" id="PF00119">
    <property type="entry name" value="ATP-synt_A"/>
    <property type="match status" value="1"/>
</dbReference>
<dbReference type="PRINTS" id="PR00123">
    <property type="entry name" value="ATPASEA"/>
</dbReference>
<dbReference type="SUPFAM" id="SSF81336">
    <property type="entry name" value="F1F0 ATP synthase subunit A"/>
    <property type="match status" value="1"/>
</dbReference>
<dbReference type="PROSITE" id="PS00449">
    <property type="entry name" value="ATPASE_A"/>
    <property type="match status" value="1"/>
</dbReference>
<organism>
    <name type="scientific">Rhodopseudomonas palustris (strain BisA53)</name>
    <dbReference type="NCBI Taxonomy" id="316055"/>
    <lineage>
        <taxon>Bacteria</taxon>
        <taxon>Pseudomonadati</taxon>
        <taxon>Pseudomonadota</taxon>
        <taxon>Alphaproteobacteria</taxon>
        <taxon>Hyphomicrobiales</taxon>
        <taxon>Nitrobacteraceae</taxon>
        <taxon>Rhodopseudomonas</taxon>
    </lineage>
</organism>
<reference key="1">
    <citation type="submission" date="2006-09" db="EMBL/GenBank/DDBJ databases">
        <title>Complete sequence of Rhodopseudomonas palustris BisA53.</title>
        <authorList>
            <consortium name="US DOE Joint Genome Institute"/>
            <person name="Copeland A."/>
            <person name="Lucas S."/>
            <person name="Lapidus A."/>
            <person name="Barry K."/>
            <person name="Detter J.C."/>
            <person name="Glavina del Rio T."/>
            <person name="Hammon N."/>
            <person name="Israni S."/>
            <person name="Dalin E."/>
            <person name="Tice H."/>
            <person name="Pitluck S."/>
            <person name="Chain P."/>
            <person name="Malfatti S."/>
            <person name="Shin M."/>
            <person name="Vergez L."/>
            <person name="Schmutz J."/>
            <person name="Larimer F."/>
            <person name="Land M."/>
            <person name="Hauser L."/>
            <person name="Pelletier D.A."/>
            <person name="Kyrpides N."/>
            <person name="Kim E."/>
            <person name="Harwood C.S."/>
            <person name="Oda Y."/>
            <person name="Richardson P."/>
        </authorList>
    </citation>
    <scope>NUCLEOTIDE SEQUENCE [LARGE SCALE GENOMIC DNA]</scope>
    <source>
        <strain>BisA53</strain>
    </source>
</reference>
<gene>
    <name evidence="1" type="primary">atpB</name>
    <name type="ordered locus">RPE_4779</name>
</gene>
<keyword id="KW-0066">ATP synthesis</keyword>
<keyword id="KW-0997">Cell inner membrane</keyword>
<keyword id="KW-1003">Cell membrane</keyword>
<keyword id="KW-0138">CF(0)</keyword>
<keyword id="KW-0375">Hydrogen ion transport</keyword>
<keyword id="KW-0406">Ion transport</keyword>
<keyword id="KW-0472">Membrane</keyword>
<keyword id="KW-0812">Transmembrane</keyword>
<keyword id="KW-1133">Transmembrane helix</keyword>
<keyword id="KW-0813">Transport</keyword>
<sequence length="249" mass="27053">MIDPIHQFNVEKIFTIGHIGNQEIAFTNSSAYMLLAVAIISLLMIGGSAGRQMVPGRLQSLAELSYEFVANTIRSTAGVEGLKFFPLVFSLFMFIMVSNMVGIIPYTFTIASHIIVTAALAFLVFFTVLIYGFKKNGLGFFKIFVPSGVPGFILPLVVFIEVFSFFLRPISHSVRLFANMLAGHIALKVFASFIPLLAGLGIAGYFGAVLPLGMVVALTALELLVAFLQAYVFAILTCIYLNDALHAGH</sequence>
<feature type="chain" id="PRO_0000362418" description="ATP synthase subunit a">
    <location>
        <begin position="1"/>
        <end position="249"/>
    </location>
</feature>
<feature type="transmembrane region" description="Helical" evidence="1">
    <location>
        <begin position="30"/>
        <end position="50"/>
    </location>
</feature>
<feature type="transmembrane region" description="Helical" evidence="1">
    <location>
        <begin position="84"/>
        <end position="104"/>
    </location>
</feature>
<feature type="transmembrane region" description="Helical" evidence="1">
    <location>
        <begin position="113"/>
        <end position="133"/>
    </location>
</feature>
<feature type="transmembrane region" description="Helical" evidence="1">
    <location>
        <begin position="143"/>
        <end position="163"/>
    </location>
</feature>
<feature type="transmembrane region" description="Helical" evidence="1">
    <location>
        <begin position="196"/>
        <end position="216"/>
    </location>
</feature>
<feature type="transmembrane region" description="Helical" evidence="1">
    <location>
        <begin position="221"/>
        <end position="241"/>
    </location>
</feature>
<evidence type="ECO:0000255" key="1">
    <source>
        <dbReference type="HAMAP-Rule" id="MF_01393"/>
    </source>
</evidence>
<proteinExistence type="inferred from homology"/>
<comment type="function">
    <text evidence="1">Key component of the proton channel; it plays a direct role in the translocation of protons across the membrane.</text>
</comment>
<comment type="subunit">
    <text evidence="1">F-type ATPases have 2 components, CF(1) - the catalytic core - and CF(0) - the membrane proton channel. CF(1) has five subunits: alpha(3), beta(3), gamma(1), delta(1), epsilon(1). CF(0) has four main subunits: a, b, b' and c.</text>
</comment>
<comment type="subcellular location">
    <subcellularLocation>
        <location evidence="1">Cell inner membrane</location>
        <topology evidence="1">Multi-pass membrane protein</topology>
    </subcellularLocation>
</comment>
<comment type="similarity">
    <text evidence="1">Belongs to the ATPase A chain family.</text>
</comment>
<accession>Q07H86</accession>